<protein>
    <recommendedName>
        <fullName evidence="9">PTS system N-acetylglucosamine-specific EIICB component</fullName>
    </recommendedName>
    <alternativeName>
        <fullName>EIICB-Nag</fullName>
    </alternativeName>
    <domain>
        <recommendedName>
            <fullName>N-acetylglucosamine permease IIC component</fullName>
        </recommendedName>
        <alternativeName>
            <fullName>PTS system N-acetylglucosamine-specific EIIC component</fullName>
        </alternativeName>
    </domain>
    <domain>
        <recommendedName>
            <fullName>N-acetylglucosamine-specific phosphotransferase enzyme IIB component</fullName>
            <ecNumber evidence="10">2.7.1.193</ecNumber>
        </recommendedName>
        <alternativeName>
            <fullName>PTS system N-acetylglucosamine-specific EIIB component</fullName>
        </alternativeName>
    </domain>
</protein>
<name>PTWCB_BACSU</name>
<feature type="chain" id="PRO_0000367594" description="PTS system N-acetylglucosamine-specific EIICB component">
    <location>
        <begin position="1"/>
        <end position="452"/>
    </location>
</feature>
<feature type="transmembrane region" description="Helical" evidence="2">
    <location>
        <begin position="8"/>
        <end position="28"/>
    </location>
</feature>
<feature type="transmembrane region" description="Helical" evidence="2">
    <location>
        <begin position="42"/>
        <end position="62"/>
    </location>
</feature>
<feature type="transmembrane region" description="Helical" evidence="2">
    <location>
        <begin position="91"/>
        <end position="111"/>
    </location>
</feature>
<feature type="transmembrane region" description="Helical" evidence="2">
    <location>
        <begin position="130"/>
        <end position="150"/>
    </location>
</feature>
<feature type="transmembrane region" description="Helical" evidence="2">
    <location>
        <begin position="163"/>
        <end position="183"/>
    </location>
</feature>
<feature type="transmembrane region" description="Helical" evidence="2">
    <location>
        <begin position="223"/>
        <end position="243"/>
    </location>
</feature>
<feature type="transmembrane region" description="Helical" evidence="2">
    <location>
        <begin position="257"/>
        <end position="277"/>
    </location>
</feature>
<feature type="transmembrane region" description="Helical" evidence="2">
    <location>
        <begin position="279"/>
        <end position="299"/>
    </location>
</feature>
<feature type="transmembrane region" description="Helical" evidence="2">
    <location>
        <begin position="329"/>
        <end position="349"/>
    </location>
</feature>
<feature type="domain" description="PTS EIIC type-1" evidence="4">
    <location>
        <begin position="1"/>
        <end position="361"/>
    </location>
</feature>
<feature type="domain" description="PTS EIIB type-1" evidence="3">
    <location>
        <begin position="375"/>
        <end position="452"/>
    </location>
</feature>
<feature type="active site" description="Phosphocysteine intermediate; for EIIB activity" evidence="3">
    <location>
        <position position="397"/>
    </location>
</feature>
<evidence type="ECO:0000250" key="1">
    <source>
        <dbReference type="UniProtKB" id="P09323"/>
    </source>
</evidence>
<evidence type="ECO:0000255" key="2"/>
<evidence type="ECO:0000255" key="3">
    <source>
        <dbReference type="PROSITE-ProRule" id="PRU00421"/>
    </source>
</evidence>
<evidence type="ECO:0000255" key="4">
    <source>
        <dbReference type="PROSITE-ProRule" id="PRU00426"/>
    </source>
</evidence>
<evidence type="ECO:0000269" key="5">
    <source>
    </source>
</evidence>
<evidence type="ECO:0000269" key="6">
    <source>
    </source>
</evidence>
<evidence type="ECO:0000269" key="7">
    <source>
    </source>
</evidence>
<evidence type="ECO:0000269" key="8">
    <source>
    </source>
</evidence>
<evidence type="ECO:0000305" key="9"/>
<evidence type="ECO:0000305" key="10">
    <source>
    </source>
</evidence>
<evidence type="ECO:0000312" key="11">
    <source>
        <dbReference type="EMBL" id="BAA22299.1"/>
    </source>
</evidence>
<organism>
    <name type="scientific">Bacillus subtilis (strain 168)</name>
    <dbReference type="NCBI Taxonomy" id="224308"/>
    <lineage>
        <taxon>Bacteria</taxon>
        <taxon>Bacillati</taxon>
        <taxon>Bacillota</taxon>
        <taxon>Bacilli</taxon>
        <taxon>Bacillales</taxon>
        <taxon>Bacillaceae</taxon>
        <taxon>Bacillus</taxon>
    </lineage>
</organism>
<reference key="1">
    <citation type="journal article" date="1997" name="Gene">
        <title>Cloning and sequencing of a 35.7 kb in the 70 degree-73 degree region of the Bacillus subtilis genome reveal genes for a new two-component system, three spore germination proteins, an iron uptake system and a general stress response protein.</title>
        <authorList>
            <person name="Yamamoto H."/>
            <person name="Uchiyama S."/>
            <person name="Nugroho F.A."/>
            <person name="Sekiguchi J."/>
        </authorList>
    </citation>
    <scope>NUCLEOTIDE SEQUENCE [GENOMIC DNA]</scope>
    <source>
        <strain>168 / AC327</strain>
    </source>
</reference>
<reference key="2">
    <citation type="journal article" date="1997" name="Nature">
        <title>The complete genome sequence of the Gram-positive bacterium Bacillus subtilis.</title>
        <authorList>
            <person name="Kunst F."/>
            <person name="Ogasawara N."/>
            <person name="Moszer I."/>
            <person name="Albertini A.M."/>
            <person name="Alloni G."/>
            <person name="Azevedo V."/>
            <person name="Bertero M.G."/>
            <person name="Bessieres P."/>
            <person name="Bolotin A."/>
            <person name="Borchert S."/>
            <person name="Borriss R."/>
            <person name="Boursier L."/>
            <person name="Brans A."/>
            <person name="Braun M."/>
            <person name="Brignell S.C."/>
            <person name="Bron S."/>
            <person name="Brouillet S."/>
            <person name="Bruschi C.V."/>
            <person name="Caldwell B."/>
            <person name="Capuano V."/>
            <person name="Carter N.M."/>
            <person name="Choi S.-K."/>
            <person name="Codani J.-J."/>
            <person name="Connerton I.F."/>
            <person name="Cummings N.J."/>
            <person name="Daniel R.A."/>
            <person name="Denizot F."/>
            <person name="Devine K.M."/>
            <person name="Duesterhoeft A."/>
            <person name="Ehrlich S.D."/>
            <person name="Emmerson P.T."/>
            <person name="Entian K.-D."/>
            <person name="Errington J."/>
            <person name="Fabret C."/>
            <person name="Ferrari E."/>
            <person name="Foulger D."/>
            <person name="Fritz C."/>
            <person name="Fujita M."/>
            <person name="Fujita Y."/>
            <person name="Fuma S."/>
            <person name="Galizzi A."/>
            <person name="Galleron N."/>
            <person name="Ghim S.-Y."/>
            <person name="Glaser P."/>
            <person name="Goffeau A."/>
            <person name="Golightly E.J."/>
            <person name="Grandi G."/>
            <person name="Guiseppi G."/>
            <person name="Guy B.J."/>
            <person name="Haga K."/>
            <person name="Haiech J."/>
            <person name="Harwood C.R."/>
            <person name="Henaut A."/>
            <person name="Hilbert H."/>
            <person name="Holsappel S."/>
            <person name="Hosono S."/>
            <person name="Hullo M.-F."/>
            <person name="Itaya M."/>
            <person name="Jones L.-M."/>
            <person name="Joris B."/>
            <person name="Karamata D."/>
            <person name="Kasahara Y."/>
            <person name="Klaerr-Blanchard M."/>
            <person name="Klein C."/>
            <person name="Kobayashi Y."/>
            <person name="Koetter P."/>
            <person name="Koningstein G."/>
            <person name="Krogh S."/>
            <person name="Kumano M."/>
            <person name="Kurita K."/>
            <person name="Lapidus A."/>
            <person name="Lardinois S."/>
            <person name="Lauber J."/>
            <person name="Lazarevic V."/>
            <person name="Lee S.-M."/>
            <person name="Levine A."/>
            <person name="Liu H."/>
            <person name="Masuda S."/>
            <person name="Mauel C."/>
            <person name="Medigue C."/>
            <person name="Medina N."/>
            <person name="Mellado R.P."/>
            <person name="Mizuno M."/>
            <person name="Moestl D."/>
            <person name="Nakai S."/>
            <person name="Noback M."/>
            <person name="Noone D."/>
            <person name="O'Reilly M."/>
            <person name="Ogawa K."/>
            <person name="Ogiwara A."/>
            <person name="Oudega B."/>
            <person name="Park S.-H."/>
            <person name="Parro V."/>
            <person name="Pohl T.M."/>
            <person name="Portetelle D."/>
            <person name="Porwollik S."/>
            <person name="Prescott A.M."/>
            <person name="Presecan E."/>
            <person name="Pujic P."/>
            <person name="Purnelle B."/>
            <person name="Rapoport G."/>
            <person name="Rey M."/>
            <person name="Reynolds S."/>
            <person name="Rieger M."/>
            <person name="Rivolta C."/>
            <person name="Rocha E."/>
            <person name="Roche B."/>
            <person name="Rose M."/>
            <person name="Sadaie Y."/>
            <person name="Sato T."/>
            <person name="Scanlan E."/>
            <person name="Schleich S."/>
            <person name="Schroeter R."/>
            <person name="Scoffone F."/>
            <person name="Sekiguchi J."/>
            <person name="Sekowska A."/>
            <person name="Seror S.J."/>
            <person name="Serror P."/>
            <person name="Shin B.-S."/>
            <person name="Soldo B."/>
            <person name="Sorokin A."/>
            <person name="Tacconi E."/>
            <person name="Takagi T."/>
            <person name="Takahashi H."/>
            <person name="Takemaru K."/>
            <person name="Takeuchi M."/>
            <person name="Tamakoshi A."/>
            <person name="Tanaka T."/>
            <person name="Terpstra P."/>
            <person name="Tognoni A."/>
            <person name="Tosato V."/>
            <person name="Uchiyama S."/>
            <person name="Vandenbol M."/>
            <person name="Vannier F."/>
            <person name="Vassarotti A."/>
            <person name="Viari A."/>
            <person name="Wambutt R."/>
            <person name="Wedler E."/>
            <person name="Wedler H."/>
            <person name="Weitzenegger T."/>
            <person name="Winters P."/>
            <person name="Wipat A."/>
            <person name="Yamamoto H."/>
            <person name="Yamane K."/>
            <person name="Yasumoto K."/>
            <person name="Yata K."/>
            <person name="Yoshida K."/>
            <person name="Yoshikawa H.-F."/>
            <person name="Zumstein E."/>
            <person name="Yoshikawa H."/>
            <person name="Danchin A."/>
        </authorList>
    </citation>
    <scope>NUCLEOTIDE SEQUENCE [LARGE SCALE GENOMIC DNA]</scope>
    <source>
        <strain>168</strain>
    </source>
</reference>
<reference key="3">
    <citation type="journal article" date="2011" name="J. Bacteriol.">
        <title>Regulon of the N-acetylglucosamine utilization regulator NagR in Bacillus subtilis.</title>
        <authorList>
            <person name="Bertram R."/>
            <person name="Rigali S."/>
            <person name="Wood N."/>
            <person name="Lulko A.T."/>
            <person name="Kuipers O.P."/>
            <person name="Titgemeyer F."/>
        </authorList>
    </citation>
    <scope>INDUCTION</scope>
</reference>
<reference key="4">
    <citation type="journal article" date="2013" name="Mol. Microbiol.">
        <title>Flotillins functionally organize the bacterial membrane.</title>
        <authorList>
            <person name="Bach J.N."/>
            <person name="Bramkamp M."/>
        </authorList>
    </citation>
    <scope>INTERACTION WITH FLOT</scope>
    <scope>SUBCELLULAR LOCATION</scope>
    <source>
        <strain>168</strain>
    </source>
</reference>
<reference key="5">
    <citation type="journal article" date="2013" name="PLoS ONE">
        <title>The use of amino sugars by Bacillus subtilis: presence of a unique operon for the catabolism of glucosamine.</title>
        <authorList>
            <person name="Gaugue I."/>
            <person name="Oberto J."/>
            <person name="Putzer H."/>
            <person name="Plumbridge J."/>
        </authorList>
    </citation>
    <scope>FUNCTION</scope>
    <scope>DISRUPTION PHENOTYPE</scope>
    <source>
        <strain>168</strain>
    </source>
</reference>
<reference key="6">
    <citation type="journal article" date="2018" name="J. Bacteriol.">
        <title>Cross talk among transporters of the phosphoenolpyruvate-dependent phosphotransferase system in Bacillus subtilis.</title>
        <authorList>
            <person name="Morabbi Heravi K."/>
            <person name="Altenbuchner J."/>
        </authorList>
    </citation>
    <scope>DISRUPTION PHENOTYPE</scope>
</reference>
<dbReference type="EC" id="2.7.1.193" evidence="10"/>
<dbReference type="EMBL" id="D86417">
    <property type="protein sequence ID" value="BAA22299.1"/>
    <property type="molecule type" value="Genomic_DNA"/>
</dbReference>
<dbReference type="EMBL" id="AL009126">
    <property type="protein sequence ID" value="CAB12599.1"/>
    <property type="molecule type" value="Genomic_DNA"/>
</dbReference>
<dbReference type="PIR" id="D69810">
    <property type="entry name" value="D69810"/>
</dbReference>
<dbReference type="RefSeq" id="NP_388651.1">
    <property type="nucleotide sequence ID" value="NC_000964.3"/>
</dbReference>
<dbReference type="SMR" id="O34521"/>
<dbReference type="FunCoup" id="O34521">
    <property type="interactions" value="109"/>
</dbReference>
<dbReference type="STRING" id="224308.BSU07700"/>
<dbReference type="TCDB" id="4.A.1.1.7">
    <property type="family name" value="the pts glucose-glucoside (glc) family"/>
</dbReference>
<dbReference type="PaxDb" id="224308-BSU07700"/>
<dbReference type="DNASU" id="938807"/>
<dbReference type="EnsemblBacteria" id="CAB12599">
    <property type="protein sequence ID" value="CAB12599"/>
    <property type="gene ID" value="BSU_07700"/>
</dbReference>
<dbReference type="GeneID" id="938807"/>
<dbReference type="KEGG" id="bsu:BSU07700"/>
<dbReference type="PATRIC" id="fig|224308.179.peg.836"/>
<dbReference type="eggNOG" id="COG1263">
    <property type="taxonomic scope" value="Bacteria"/>
</dbReference>
<dbReference type="eggNOG" id="COG1264">
    <property type="taxonomic scope" value="Bacteria"/>
</dbReference>
<dbReference type="InParanoid" id="O34521"/>
<dbReference type="OrthoDB" id="9764327at2"/>
<dbReference type="PhylomeDB" id="O34521"/>
<dbReference type="BioCyc" id="BSUB:BSU07700-MONOMER"/>
<dbReference type="Proteomes" id="UP000001570">
    <property type="component" value="Chromosome"/>
</dbReference>
<dbReference type="GO" id="GO:0045121">
    <property type="term" value="C:membrane raft"/>
    <property type="evidence" value="ECO:0007669"/>
    <property type="project" value="UniProtKB-SubCell"/>
</dbReference>
<dbReference type="GO" id="GO:0019866">
    <property type="term" value="C:organelle inner membrane"/>
    <property type="evidence" value="ECO:0007669"/>
    <property type="project" value="InterPro"/>
</dbReference>
<dbReference type="GO" id="GO:0005886">
    <property type="term" value="C:plasma membrane"/>
    <property type="evidence" value="ECO:0000318"/>
    <property type="project" value="GO_Central"/>
</dbReference>
<dbReference type="GO" id="GO:0016301">
    <property type="term" value="F:kinase activity"/>
    <property type="evidence" value="ECO:0007669"/>
    <property type="project" value="UniProtKB-KW"/>
</dbReference>
<dbReference type="GO" id="GO:0015572">
    <property type="term" value="F:N-acetylglucosamine transmembrane transporter activity"/>
    <property type="evidence" value="ECO:0007669"/>
    <property type="project" value="InterPro"/>
</dbReference>
<dbReference type="GO" id="GO:0103111">
    <property type="term" value="F:protein-N(pi)-phosphohistidine--N-acetyl-D-glucosamine phosphotransferase activity"/>
    <property type="evidence" value="ECO:0007669"/>
    <property type="project" value="RHEA"/>
</dbReference>
<dbReference type="GO" id="GO:0008982">
    <property type="term" value="F:protein-N(PI)-phosphohistidine-sugar phosphotransferase activity"/>
    <property type="evidence" value="ECO:0007669"/>
    <property type="project" value="InterPro"/>
</dbReference>
<dbReference type="GO" id="GO:0090563">
    <property type="term" value="F:protein-phosphocysteine-sugar phosphotransferase activity"/>
    <property type="evidence" value="ECO:0000318"/>
    <property type="project" value="GO_Central"/>
</dbReference>
<dbReference type="GO" id="GO:0015764">
    <property type="term" value="P:N-acetylglucosamine transport"/>
    <property type="evidence" value="ECO:0000318"/>
    <property type="project" value="GO_Central"/>
</dbReference>
<dbReference type="GO" id="GO:0009401">
    <property type="term" value="P:phosphoenolpyruvate-dependent sugar phosphotransferase system"/>
    <property type="evidence" value="ECO:0000318"/>
    <property type="project" value="GO_Central"/>
</dbReference>
<dbReference type="CDD" id="cd00212">
    <property type="entry name" value="PTS_IIB_glc"/>
    <property type="match status" value="1"/>
</dbReference>
<dbReference type="FunFam" id="3.30.1360.60:FF:000001">
    <property type="entry name" value="PTS system glucose-specific IIBC component PtsG"/>
    <property type="match status" value="1"/>
</dbReference>
<dbReference type="Gene3D" id="3.30.1360.60">
    <property type="entry name" value="Glucose permease domain IIB"/>
    <property type="match status" value="1"/>
</dbReference>
<dbReference type="InterPro" id="IPR036878">
    <property type="entry name" value="Glu_permease_IIB"/>
</dbReference>
<dbReference type="InterPro" id="IPR018113">
    <property type="entry name" value="PTrfase_EIIB_Cys"/>
</dbReference>
<dbReference type="InterPro" id="IPR003352">
    <property type="entry name" value="PTS_EIIC"/>
</dbReference>
<dbReference type="InterPro" id="IPR013013">
    <property type="entry name" value="PTS_EIIC_1"/>
</dbReference>
<dbReference type="InterPro" id="IPR050429">
    <property type="entry name" value="PTS_Glucose_EIICBA"/>
</dbReference>
<dbReference type="InterPro" id="IPR001996">
    <property type="entry name" value="PTS_IIB_1"/>
</dbReference>
<dbReference type="InterPro" id="IPR010974">
    <property type="entry name" value="PTS_IIBC_nag"/>
</dbReference>
<dbReference type="NCBIfam" id="TIGR00826">
    <property type="entry name" value="EIIB_glc"/>
    <property type="match status" value="1"/>
</dbReference>
<dbReference type="NCBIfam" id="TIGR01998">
    <property type="entry name" value="PTS-II-BC-nag"/>
    <property type="match status" value="1"/>
</dbReference>
<dbReference type="PANTHER" id="PTHR30009">
    <property type="entry name" value="CYTOCHROME C-TYPE SYNTHESIS PROTEIN AND PTS TRANSMEMBRANE COMPONENT"/>
    <property type="match status" value="1"/>
</dbReference>
<dbReference type="PANTHER" id="PTHR30009:SF4">
    <property type="entry name" value="PTS SYSTEM N-ACETYLGLUCOSAMINE-SPECIFIC EIICBA COMPONENT"/>
    <property type="match status" value="1"/>
</dbReference>
<dbReference type="Pfam" id="PF00367">
    <property type="entry name" value="PTS_EIIB"/>
    <property type="match status" value="1"/>
</dbReference>
<dbReference type="Pfam" id="PF02378">
    <property type="entry name" value="PTS_EIIC"/>
    <property type="match status" value="1"/>
</dbReference>
<dbReference type="SUPFAM" id="SSF55604">
    <property type="entry name" value="Glucose permease domain IIB"/>
    <property type="match status" value="1"/>
</dbReference>
<dbReference type="PROSITE" id="PS51098">
    <property type="entry name" value="PTS_EIIB_TYPE_1"/>
    <property type="match status" value="1"/>
</dbReference>
<dbReference type="PROSITE" id="PS01035">
    <property type="entry name" value="PTS_EIIB_TYPE_1_CYS"/>
    <property type="match status" value="1"/>
</dbReference>
<dbReference type="PROSITE" id="PS51103">
    <property type="entry name" value="PTS_EIIC_TYPE_1"/>
    <property type="match status" value="1"/>
</dbReference>
<comment type="function">
    <text evidence="1 7">The phosphoenolpyruvate-dependent sugar phosphotransferase system (sugar PTS), a major carbohydrate active -transport system, catalyzes the phosphorylation of incoming sugar substrates concomitantly with their translocation across the cell membrane (By similarity). This system is involved in N-acetylglucosamine transport (PubMed:23667565).</text>
</comment>
<comment type="catalytic activity">
    <reaction evidence="10">
        <text>N(pros)-phospho-L-histidyl-[protein] + N-acetyl-D-glucosamine(out) = N-acetyl-D-glucosamine 6-phosphate(in) + L-histidyl-[protein]</text>
        <dbReference type="Rhea" id="RHEA:49240"/>
        <dbReference type="Rhea" id="RHEA-COMP:9745"/>
        <dbReference type="Rhea" id="RHEA-COMP:9746"/>
        <dbReference type="ChEBI" id="CHEBI:29979"/>
        <dbReference type="ChEBI" id="CHEBI:57513"/>
        <dbReference type="ChEBI" id="CHEBI:64837"/>
        <dbReference type="ChEBI" id="CHEBI:506227"/>
        <dbReference type="EC" id="2.7.1.193"/>
    </reaction>
</comment>
<comment type="subunit">
    <text evidence="6">Interacts with FloT.</text>
</comment>
<comment type="subcellular location">
    <subcellularLocation>
        <location evidence="4 6">Cell membrane</location>
        <topology evidence="4">Multi-pass membrane protein</topology>
    </subcellularLocation>
    <subcellularLocation>
        <location evidence="6">Membrane raft</location>
        <topology>Multi-pass membrane protein</topology>
    </subcellularLocation>
    <text evidence="6">Present in detergent-resistant membrane (DRM) fractions that may be equivalent to eukaryotic membrane rafts; these rafts include proteins involved in signaling, molecule trafficking and protein secretion.</text>
</comment>
<comment type="induction">
    <text evidence="5">Expression is repressed by the HTH-type transcriptional regulator NagR.</text>
</comment>
<comment type="domain">
    <text evidence="4">The EIIC domain type-1 forms the PTS system translocation channel and contains the specific substrate-binding site.</text>
</comment>
<comment type="domain">
    <text evidence="3">The PTS EIIB type-1 domain is phosphorylated by phospho-EIIA on a cysteinyl residue. Then, it transfers the phosphoryl group to the sugar substrate concomitantly with the sugar uptake processed by the PTS EIIC type-1 domain.</text>
</comment>
<comment type="disruption phenotype">
    <text evidence="7 8">Deletion of the gene almost completely prevents growth on N-acetylglucosamine, but has no effect on growth on glucosamine (PubMed:23667565, PubMed:30038046). The gamP-nagP double mutant can still grow normally on glucosamine (PubMed:23667565).</text>
</comment>
<keyword id="KW-1003">Cell membrane</keyword>
<keyword id="KW-0418">Kinase</keyword>
<keyword id="KW-0472">Membrane</keyword>
<keyword id="KW-0598">Phosphotransferase system</keyword>
<keyword id="KW-1185">Reference proteome</keyword>
<keyword id="KW-0762">Sugar transport</keyword>
<keyword id="KW-0808">Transferase</keyword>
<keyword id="KW-0812">Transmembrane</keyword>
<keyword id="KW-1133">Transmembrane helix</keyword>
<keyword id="KW-0813">Transport</keyword>
<proteinExistence type="evidence at protein level"/>
<sequence>MLSFLQKLGKSFMLPIAVLPAVGIILALGREDVFNIPFVYQAGTAVFDHLPLIFAIGIAIGISKDSNGAAGLSGAISYLMLDAATKTIDKTNNMAVFGGIIAGLIAGYTYNRFKDTKLPEYLGFFSGRRLVPILTAIITIILAGIFGVVWPPIQSCINSFGEWMLGLGGIGAGIFGLFNRLLIPLGLHHVLNNIFWFQFGEYNGVTGDLARFFAKDPTAGTYMTGFFPIMMFGLPAACLAMVVTAKPSKRKATAGMMIGFALTAFITGITEPIEFAFMFLSPLLYAVHAVLTGLSLFIVNWLGIRSGFSFSAGAIDYVLSYGIAEKPLLLLLVGICYAAVYFIVFYVLIKALNLKTPGREDDDVDEVLDENTVQDVNENIMLKGLGGKENLQTIDHCATRLRLTVKDTALVDEALLKKAGAKGVVKSGGQSVQVIIGPNVEFAAEELRAAVK</sequence>
<gene>
    <name type="primary">nagP</name>
    <name evidence="11" type="synonym">yflF</name>
    <name type="ordered locus">BSU07700</name>
</gene>
<accession>O34521</accession>
<accession>Q79ET9</accession>